<proteinExistence type="inferred from homology"/>
<accession>A8GVJ0</accession>
<protein>
    <recommendedName>
        <fullName evidence="1">Lipoprotein signal peptidase</fullName>
        <ecNumber evidence="1">3.4.23.36</ecNumber>
    </recommendedName>
    <alternativeName>
        <fullName evidence="1">Prolipoprotein signal peptidase</fullName>
    </alternativeName>
    <alternativeName>
        <fullName evidence="1">Signal peptidase II</fullName>
        <shortName evidence="1">SPase II</shortName>
    </alternativeName>
</protein>
<name>LSPA_RICB8</name>
<feature type="chain" id="PRO_1000038819" description="Lipoprotein signal peptidase">
    <location>
        <begin position="1"/>
        <end position="196"/>
    </location>
</feature>
<feature type="transmembrane region" description="Helical" evidence="1">
    <location>
        <begin position="75"/>
        <end position="95"/>
    </location>
</feature>
<feature type="transmembrane region" description="Helical" evidence="1">
    <location>
        <begin position="97"/>
        <end position="117"/>
    </location>
</feature>
<feature type="transmembrane region" description="Helical" evidence="1">
    <location>
        <begin position="135"/>
        <end position="155"/>
    </location>
</feature>
<feature type="active site" evidence="1">
    <location>
        <position position="126"/>
    </location>
</feature>
<feature type="active site" evidence="1">
    <location>
        <position position="144"/>
    </location>
</feature>
<comment type="function">
    <text evidence="1">This protein specifically catalyzes the removal of signal peptides from prolipoproteins.</text>
</comment>
<comment type="catalytic activity">
    <reaction evidence="1">
        <text>Release of signal peptides from bacterial membrane prolipoproteins. Hydrolyzes -Xaa-Yaa-Zaa-|-(S,diacylglyceryl)Cys-, in which Xaa is hydrophobic (preferably Leu), and Yaa (Ala or Ser) and Zaa (Gly or Ala) have small, neutral side chains.</text>
        <dbReference type="EC" id="3.4.23.36"/>
    </reaction>
</comment>
<comment type="pathway">
    <text evidence="1">Protein modification; lipoprotein biosynthesis (signal peptide cleavage).</text>
</comment>
<comment type="subcellular location">
    <subcellularLocation>
        <location evidence="1">Cell inner membrane</location>
        <topology evidence="1">Multi-pass membrane protein</topology>
    </subcellularLocation>
</comment>
<comment type="similarity">
    <text evidence="1">Belongs to the peptidase A8 family.</text>
</comment>
<keyword id="KW-0064">Aspartyl protease</keyword>
<keyword id="KW-0997">Cell inner membrane</keyword>
<keyword id="KW-1003">Cell membrane</keyword>
<keyword id="KW-0378">Hydrolase</keyword>
<keyword id="KW-0472">Membrane</keyword>
<keyword id="KW-0645">Protease</keyword>
<keyword id="KW-0812">Transmembrane</keyword>
<keyword id="KW-1133">Transmembrane helix</keyword>
<gene>
    <name evidence="1" type="primary">lspA</name>
    <name type="ordered locus">A1I_02465</name>
</gene>
<evidence type="ECO:0000255" key="1">
    <source>
        <dbReference type="HAMAP-Rule" id="MF_00161"/>
    </source>
</evidence>
<organism>
    <name type="scientific">Rickettsia bellii (strain OSU 85-389)</name>
    <dbReference type="NCBI Taxonomy" id="391896"/>
    <lineage>
        <taxon>Bacteria</taxon>
        <taxon>Pseudomonadati</taxon>
        <taxon>Pseudomonadota</taxon>
        <taxon>Alphaproteobacteria</taxon>
        <taxon>Rickettsiales</taxon>
        <taxon>Rickettsiaceae</taxon>
        <taxon>Rickettsieae</taxon>
        <taxon>Rickettsia</taxon>
        <taxon>belli group</taxon>
    </lineage>
</organism>
<sequence length="196" mass="22852">MILSFKKLYLTFARSSRIIITLVIIDQLTKWWFINNLRWKPGLTLKVTSFLNMVYTWNYGISFGLMRDYYQYSNIVFLITNTIIVCYLYYLMMSSKTIGGFAGYSFVIGGAIGNLIDRSFRGAVFDFIHFYYQDYSFPVFNLADCFITLGVIILVEDYYSAKKNIEEKAKENYDKAQIEAMAEKIRNAPQGDNDKI</sequence>
<reference key="1">
    <citation type="submission" date="2007-09" db="EMBL/GenBank/DDBJ databases">
        <title>Complete genome sequencing of Rickettsia bellii.</title>
        <authorList>
            <person name="Madan A."/>
            <person name="Lee H."/>
            <person name="Madan A."/>
            <person name="Yoon J.-G."/>
            <person name="Ryu G.-Y."/>
            <person name="Dasch G."/>
            <person name="Ereemeva M."/>
        </authorList>
    </citation>
    <scope>NUCLEOTIDE SEQUENCE [LARGE SCALE GENOMIC DNA]</scope>
    <source>
        <strain>OSU 85-389</strain>
    </source>
</reference>
<dbReference type="EC" id="3.4.23.36" evidence="1"/>
<dbReference type="EMBL" id="CP000849">
    <property type="protein sequence ID" value="ABV78867.1"/>
    <property type="molecule type" value="Genomic_DNA"/>
</dbReference>
<dbReference type="RefSeq" id="WP_011477552.1">
    <property type="nucleotide sequence ID" value="NC_009883.1"/>
</dbReference>
<dbReference type="SMR" id="A8GVJ0"/>
<dbReference type="KEGG" id="rbo:A1I_02465"/>
<dbReference type="HOGENOM" id="CLU_083252_4_3_5"/>
<dbReference type="UniPathway" id="UPA00665"/>
<dbReference type="GO" id="GO:0005886">
    <property type="term" value="C:plasma membrane"/>
    <property type="evidence" value="ECO:0007669"/>
    <property type="project" value="UniProtKB-SubCell"/>
</dbReference>
<dbReference type="GO" id="GO:0004190">
    <property type="term" value="F:aspartic-type endopeptidase activity"/>
    <property type="evidence" value="ECO:0007669"/>
    <property type="project" value="UniProtKB-UniRule"/>
</dbReference>
<dbReference type="GO" id="GO:0006508">
    <property type="term" value="P:proteolysis"/>
    <property type="evidence" value="ECO:0007669"/>
    <property type="project" value="UniProtKB-KW"/>
</dbReference>
<dbReference type="HAMAP" id="MF_00161">
    <property type="entry name" value="LspA"/>
    <property type="match status" value="1"/>
</dbReference>
<dbReference type="InterPro" id="IPR001872">
    <property type="entry name" value="Peptidase_A8"/>
</dbReference>
<dbReference type="NCBIfam" id="TIGR00077">
    <property type="entry name" value="lspA"/>
    <property type="match status" value="1"/>
</dbReference>
<dbReference type="PANTHER" id="PTHR33695">
    <property type="entry name" value="LIPOPROTEIN SIGNAL PEPTIDASE"/>
    <property type="match status" value="1"/>
</dbReference>
<dbReference type="PANTHER" id="PTHR33695:SF1">
    <property type="entry name" value="LIPOPROTEIN SIGNAL PEPTIDASE"/>
    <property type="match status" value="1"/>
</dbReference>
<dbReference type="Pfam" id="PF01252">
    <property type="entry name" value="Peptidase_A8"/>
    <property type="match status" value="1"/>
</dbReference>
<dbReference type="PRINTS" id="PR00781">
    <property type="entry name" value="LIPOSIGPTASE"/>
</dbReference>